<feature type="signal peptide" evidence="1">
    <location>
        <begin position="1"/>
        <end position="21"/>
    </location>
</feature>
<feature type="chain" id="PRO_5000314142" description="Outer-membrane lipoprotein carrier protein">
    <location>
        <begin position="22"/>
        <end position="203"/>
    </location>
</feature>
<evidence type="ECO:0000255" key="1">
    <source>
        <dbReference type="HAMAP-Rule" id="MF_00240"/>
    </source>
</evidence>
<proteinExistence type="inferred from homology"/>
<dbReference type="EMBL" id="CP000946">
    <property type="protein sequence ID" value="ACA78334.1"/>
    <property type="molecule type" value="Genomic_DNA"/>
</dbReference>
<dbReference type="RefSeq" id="WP_001295343.1">
    <property type="nucleotide sequence ID" value="NZ_MTFT01000009.1"/>
</dbReference>
<dbReference type="BMRB" id="B1IWN2"/>
<dbReference type="SMR" id="B1IWN2"/>
<dbReference type="GeneID" id="93776529"/>
<dbReference type="KEGG" id="ecl:EcolC_2705"/>
<dbReference type="HOGENOM" id="CLU_087560_1_1_6"/>
<dbReference type="GO" id="GO:0030288">
    <property type="term" value="C:outer membrane-bounded periplasmic space"/>
    <property type="evidence" value="ECO:0007669"/>
    <property type="project" value="TreeGrafter"/>
</dbReference>
<dbReference type="GO" id="GO:0044874">
    <property type="term" value="P:lipoprotein localization to outer membrane"/>
    <property type="evidence" value="ECO:0007669"/>
    <property type="project" value="UniProtKB-UniRule"/>
</dbReference>
<dbReference type="GO" id="GO:0042953">
    <property type="term" value="P:lipoprotein transport"/>
    <property type="evidence" value="ECO:0007669"/>
    <property type="project" value="InterPro"/>
</dbReference>
<dbReference type="CDD" id="cd16325">
    <property type="entry name" value="LolA"/>
    <property type="match status" value="1"/>
</dbReference>
<dbReference type="FunFam" id="2.50.20.10:FF:000001">
    <property type="entry name" value="Outer-membrane lipoprotein carrier protein"/>
    <property type="match status" value="1"/>
</dbReference>
<dbReference type="Gene3D" id="2.50.20.10">
    <property type="entry name" value="Lipoprotein localisation LolA/LolB/LppX"/>
    <property type="match status" value="1"/>
</dbReference>
<dbReference type="HAMAP" id="MF_00240">
    <property type="entry name" value="LolA"/>
    <property type="match status" value="1"/>
</dbReference>
<dbReference type="InterPro" id="IPR029046">
    <property type="entry name" value="LolA/LolB/LppX"/>
</dbReference>
<dbReference type="InterPro" id="IPR004564">
    <property type="entry name" value="OM_lipoprot_carrier_LolA-like"/>
</dbReference>
<dbReference type="InterPro" id="IPR018323">
    <property type="entry name" value="OM_lipoprot_carrier_LolA_Pbac"/>
</dbReference>
<dbReference type="NCBIfam" id="TIGR00547">
    <property type="entry name" value="lolA"/>
    <property type="match status" value="1"/>
</dbReference>
<dbReference type="PANTHER" id="PTHR35869">
    <property type="entry name" value="OUTER-MEMBRANE LIPOPROTEIN CARRIER PROTEIN"/>
    <property type="match status" value="1"/>
</dbReference>
<dbReference type="PANTHER" id="PTHR35869:SF1">
    <property type="entry name" value="OUTER-MEMBRANE LIPOPROTEIN CARRIER PROTEIN"/>
    <property type="match status" value="1"/>
</dbReference>
<dbReference type="Pfam" id="PF03548">
    <property type="entry name" value="LolA"/>
    <property type="match status" value="1"/>
</dbReference>
<dbReference type="SUPFAM" id="SSF89392">
    <property type="entry name" value="Prokaryotic lipoproteins and lipoprotein localization factors"/>
    <property type="match status" value="1"/>
</dbReference>
<accession>B1IWN2</accession>
<comment type="function">
    <text evidence="1">Participates in the translocation of lipoproteins from the inner membrane to the outer membrane. Only forms a complex with a lipoprotein if the residue after the N-terminal Cys is not an aspartate (The Asp acts as a targeting signal to indicate that the lipoprotein should stay in the inner membrane).</text>
</comment>
<comment type="subunit">
    <text evidence="1">Monomer.</text>
</comment>
<comment type="subcellular location">
    <subcellularLocation>
        <location evidence="1">Periplasm</location>
    </subcellularLocation>
</comment>
<comment type="similarity">
    <text evidence="1">Belongs to the LolA family.</text>
</comment>
<keyword id="KW-0143">Chaperone</keyword>
<keyword id="KW-0574">Periplasm</keyword>
<keyword id="KW-0653">Protein transport</keyword>
<keyword id="KW-0732">Signal</keyword>
<keyword id="KW-0813">Transport</keyword>
<organism>
    <name type="scientific">Escherichia coli (strain ATCC 8739 / DSM 1576 / NBRC 3972 / NCIMB 8545 / WDCM 00012 / Crooks)</name>
    <dbReference type="NCBI Taxonomy" id="481805"/>
    <lineage>
        <taxon>Bacteria</taxon>
        <taxon>Pseudomonadati</taxon>
        <taxon>Pseudomonadota</taxon>
        <taxon>Gammaproteobacteria</taxon>
        <taxon>Enterobacterales</taxon>
        <taxon>Enterobacteriaceae</taxon>
        <taxon>Escherichia</taxon>
    </lineage>
</organism>
<name>LOLA_ECOLC</name>
<gene>
    <name evidence="1" type="primary">lolA</name>
    <name type="ordered locus">EcolC_2705</name>
</gene>
<sequence>MKKIAITCALLSSLVASSVWADAASDLKSRLDKVSSFHASFTQKVTDGSGAAVQEGQGDLWVKRPNLFNWHMTQPDESILVSDGKTLWFYNPFVEQATATWLKDATGNTPFMLIARNQSSDWQQYNIKQNGDDFVLTPKASNGNLKQFTINVGRDGTIHQFSAVEQDDQRSSYQLKSQQNGAVDAAKFTFTPPQGVTVDDQRK</sequence>
<protein>
    <recommendedName>
        <fullName evidence="1">Outer-membrane lipoprotein carrier protein</fullName>
    </recommendedName>
</protein>
<reference key="1">
    <citation type="submission" date="2008-02" db="EMBL/GenBank/DDBJ databases">
        <title>Complete sequence of Escherichia coli C str. ATCC 8739.</title>
        <authorList>
            <person name="Copeland A."/>
            <person name="Lucas S."/>
            <person name="Lapidus A."/>
            <person name="Glavina del Rio T."/>
            <person name="Dalin E."/>
            <person name="Tice H."/>
            <person name="Bruce D."/>
            <person name="Goodwin L."/>
            <person name="Pitluck S."/>
            <person name="Kiss H."/>
            <person name="Brettin T."/>
            <person name="Detter J.C."/>
            <person name="Han C."/>
            <person name="Kuske C.R."/>
            <person name="Schmutz J."/>
            <person name="Larimer F."/>
            <person name="Land M."/>
            <person name="Hauser L."/>
            <person name="Kyrpides N."/>
            <person name="Mikhailova N."/>
            <person name="Ingram L."/>
            <person name="Richardson P."/>
        </authorList>
    </citation>
    <scope>NUCLEOTIDE SEQUENCE [LARGE SCALE GENOMIC DNA]</scope>
    <source>
        <strain>ATCC 8739 / DSM 1576 / NBRC 3972 / NCIMB 8545 / WDCM 00012 / Crooks</strain>
    </source>
</reference>